<gene>
    <name type="primary">OR1E2</name>
    <name type="synonym">OR1E4</name>
</gene>
<evidence type="ECO:0000255" key="1"/>
<evidence type="ECO:0000255" key="2">
    <source>
        <dbReference type="PROSITE-ProRule" id="PRU00521"/>
    </source>
</evidence>
<evidence type="ECO:0000269" key="3">
    <source>
    </source>
</evidence>
<evidence type="ECO:0000269" key="4">
    <source>
    </source>
</evidence>
<evidence type="ECO:0000305" key="5"/>
<comment type="function">
    <text evidence="5">Odorant receptor.</text>
</comment>
<comment type="subcellular location">
    <subcellularLocation>
        <location>Cell membrane</location>
        <topology>Multi-pass membrane protein</topology>
    </subcellularLocation>
</comment>
<comment type="similarity">
    <text evidence="2">Belongs to the G-protein coupled receptor 1 family.</text>
</comment>
<comment type="online information" name="Human Olfactory Receptor Data Exploratorium (HORDE)">
    <link uri="http://genome.weizmann.ac.il/horde/card/index/symbol:OR1E2"/>
</comment>
<protein>
    <recommendedName>
        <fullName>Olfactory receptor 1E2</fullName>
    </recommendedName>
    <alternativeName>
        <fullName>Olfactory receptor 17-93/17-135/17-136</fullName>
        <shortName>OR17-135</shortName>
        <shortName>OR17-136</shortName>
        <shortName>OR17-93</shortName>
    </alternativeName>
    <alternativeName>
        <fullName>Olfactory receptor 1E4</fullName>
    </alternativeName>
</protein>
<dbReference type="EMBL" id="AF087925">
    <property type="protein sequence ID" value="AAF37315.1"/>
    <property type="molecule type" value="Genomic_DNA"/>
</dbReference>
<dbReference type="EMBL" id="AF095725">
    <property type="protein sequence ID" value="AAF03260.1"/>
    <property type="molecule type" value="Genomic_DNA"/>
</dbReference>
<dbReference type="EMBL" id="BC121105">
    <property type="protein sequence ID" value="AAI21106.1"/>
    <property type="molecule type" value="mRNA"/>
</dbReference>
<dbReference type="EMBL" id="BC121106">
    <property type="protein sequence ID" value="AAI21107.1"/>
    <property type="molecule type" value="mRNA"/>
</dbReference>
<dbReference type="EMBL" id="U04686">
    <property type="protein sequence ID" value="AAA18349.1"/>
    <property type="molecule type" value="Genomic_DNA"/>
</dbReference>
<dbReference type="EMBL" id="U86241">
    <property type="protein sequence ID" value="AAC39621.1"/>
    <property type="molecule type" value="Genomic_DNA"/>
</dbReference>
<dbReference type="EMBL" id="U86242">
    <property type="protein sequence ID" value="AAC39622.1"/>
    <property type="molecule type" value="Genomic_DNA"/>
</dbReference>
<dbReference type="EMBL" id="AF399551">
    <property type="protein sequence ID" value="AAK95036.1"/>
    <property type="molecule type" value="Genomic_DNA"/>
</dbReference>
<dbReference type="EMBL" id="U76377">
    <property type="protein sequence ID" value="AAD00249.1"/>
    <property type="molecule type" value="Genomic_DNA"/>
</dbReference>
<dbReference type="CCDS" id="CCDS11026.1"/>
<dbReference type="PIR" id="I38478">
    <property type="entry name" value="I38478"/>
</dbReference>
<dbReference type="RefSeq" id="NP_003545.1">
    <property type="nucleotide sequence ID" value="NM_003554.2"/>
</dbReference>
<dbReference type="SMR" id="P47887"/>
<dbReference type="BioGRID" id="113978">
    <property type="interactions" value="1"/>
</dbReference>
<dbReference type="FunCoup" id="P47887">
    <property type="interactions" value="461"/>
</dbReference>
<dbReference type="STRING" id="9606.ENSP00000248384"/>
<dbReference type="GlyCosmos" id="P47887">
    <property type="glycosylation" value="2 sites, No reported glycans"/>
</dbReference>
<dbReference type="GlyGen" id="P47887">
    <property type="glycosylation" value="2 sites"/>
</dbReference>
<dbReference type="iPTMnet" id="P47887"/>
<dbReference type="PhosphoSitePlus" id="P47887"/>
<dbReference type="BioMuta" id="OR1E2"/>
<dbReference type="DMDM" id="9297116"/>
<dbReference type="PaxDb" id="9606-ENSP00000248384"/>
<dbReference type="ProteomicsDB" id="55811"/>
<dbReference type="Antibodypedia" id="52932">
    <property type="antibodies" value="12 antibodies from 8 providers"/>
</dbReference>
<dbReference type="DNASU" id="8388"/>
<dbReference type="Ensembl" id="ENST00000248384.1">
    <property type="protein sequence ID" value="ENSP00000248384.1"/>
    <property type="gene ID" value="ENSG00000127780.3"/>
</dbReference>
<dbReference type="GeneID" id="8388"/>
<dbReference type="KEGG" id="hsa:8388"/>
<dbReference type="MANE-Select" id="ENST00000248384.1">
    <property type="protein sequence ID" value="ENSP00000248384.1"/>
    <property type="RefSeq nucleotide sequence ID" value="NM_003554.2"/>
    <property type="RefSeq protein sequence ID" value="NP_003545.1"/>
</dbReference>
<dbReference type="UCSC" id="uc010vre.2">
    <property type="organism name" value="human"/>
</dbReference>
<dbReference type="AGR" id="HGNC:8190"/>
<dbReference type="CTD" id="8388"/>
<dbReference type="GeneCards" id="OR1E2"/>
<dbReference type="HGNC" id="HGNC:8190">
    <property type="gene designation" value="OR1E2"/>
</dbReference>
<dbReference type="HPA" id="ENSG00000127780">
    <property type="expression patterns" value="Not detected"/>
</dbReference>
<dbReference type="neXtProt" id="NX_P47887"/>
<dbReference type="PharmGKB" id="PA32063"/>
<dbReference type="VEuPathDB" id="HostDB:ENSG00000127780"/>
<dbReference type="eggNOG" id="ENOG502SI5J">
    <property type="taxonomic scope" value="Eukaryota"/>
</dbReference>
<dbReference type="GeneTree" id="ENSGT00940000165283"/>
<dbReference type="HOGENOM" id="CLU_012526_1_3_1"/>
<dbReference type="InParanoid" id="P47887"/>
<dbReference type="OMA" id="VMALMYM"/>
<dbReference type="OrthoDB" id="9975554at2759"/>
<dbReference type="PAN-GO" id="P47887">
    <property type="GO annotations" value="3 GO annotations based on evolutionary models"/>
</dbReference>
<dbReference type="PhylomeDB" id="P47887"/>
<dbReference type="TreeFam" id="TF337210"/>
<dbReference type="PathwayCommons" id="P47887"/>
<dbReference type="Reactome" id="R-HSA-9752946">
    <property type="pathway name" value="Expression and translocation of olfactory receptors"/>
</dbReference>
<dbReference type="BioGRID-ORCS" id="8388">
    <property type="hits" value="242 hits in 691 CRISPR screens"/>
</dbReference>
<dbReference type="GeneWiki" id="OR1E2"/>
<dbReference type="GenomeRNAi" id="8388"/>
<dbReference type="Pharos" id="P47887">
    <property type="development level" value="Tdark"/>
</dbReference>
<dbReference type="PRO" id="PR:P47887"/>
<dbReference type="Proteomes" id="UP000005640">
    <property type="component" value="Chromosome 17"/>
</dbReference>
<dbReference type="RNAct" id="P47887">
    <property type="molecule type" value="protein"/>
</dbReference>
<dbReference type="Bgee" id="ENSG00000127780">
    <property type="expression patterns" value="Expressed in hindlimb stylopod muscle and 2 other cell types or tissues"/>
</dbReference>
<dbReference type="ExpressionAtlas" id="P47887">
    <property type="expression patterns" value="baseline and differential"/>
</dbReference>
<dbReference type="GO" id="GO:0005886">
    <property type="term" value="C:plasma membrane"/>
    <property type="evidence" value="ECO:0000318"/>
    <property type="project" value="GO_Central"/>
</dbReference>
<dbReference type="GO" id="GO:0004930">
    <property type="term" value="F:G protein-coupled receptor activity"/>
    <property type="evidence" value="ECO:0007669"/>
    <property type="project" value="UniProtKB-KW"/>
</dbReference>
<dbReference type="GO" id="GO:0004984">
    <property type="term" value="F:olfactory receptor activity"/>
    <property type="evidence" value="ECO:0000318"/>
    <property type="project" value="GO_Central"/>
</dbReference>
<dbReference type="GO" id="GO:0038023">
    <property type="term" value="F:signaling receptor activity"/>
    <property type="evidence" value="ECO:0000304"/>
    <property type="project" value="ProtInc"/>
</dbReference>
<dbReference type="GO" id="GO:0007606">
    <property type="term" value="P:sensory perception of chemical stimulus"/>
    <property type="evidence" value="ECO:0000304"/>
    <property type="project" value="ProtInc"/>
</dbReference>
<dbReference type="GO" id="GO:0007165">
    <property type="term" value="P:signal transduction"/>
    <property type="evidence" value="ECO:0000318"/>
    <property type="project" value="GO_Central"/>
</dbReference>
<dbReference type="CDD" id="cd15236">
    <property type="entry name" value="7tmA_OR1E-like"/>
    <property type="match status" value="1"/>
</dbReference>
<dbReference type="FunFam" id="1.10.1220.70:FF:000001">
    <property type="entry name" value="Olfactory receptor"/>
    <property type="match status" value="1"/>
</dbReference>
<dbReference type="FunFam" id="1.20.1070.10:FF:000009">
    <property type="entry name" value="Olfactory receptor"/>
    <property type="match status" value="1"/>
</dbReference>
<dbReference type="Gene3D" id="1.20.1070.10">
    <property type="entry name" value="Rhodopsin 7-helix transmembrane proteins"/>
    <property type="match status" value="1"/>
</dbReference>
<dbReference type="InterPro" id="IPR000276">
    <property type="entry name" value="GPCR_Rhodpsn"/>
</dbReference>
<dbReference type="InterPro" id="IPR017452">
    <property type="entry name" value="GPCR_Rhodpsn_7TM"/>
</dbReference>
<dbReference type="InterPro" id="IPR000725">
    <property type="entry name" value="Olfact_rcpt"/>
</dbReference>
<dbReference type="PANTHER" id="PTHR48001">
    <property type="entry name" value="OLFACTORY RECEPTOR"/>
    <property type="match status" value="1"/>
</dbReference>
<dbReference type="Pfam" id="PF13853">
    <property type="entry name" value="7tm_4"/>
    <property type="match status" value="1"/>
</dbReference>
<dbReference type="PRINTS" id="PR00237">
    <property type="entry name" value="GPCRRHODOPSN"/>
</dbReference>
<dbReference type="PRINTS" id="PR00245">
    <property type="entry name" value="OLFACTORYR"/>
</dbReference>
<dbReference type="SUPFAM" id="SSF81321">
    <property type="entry name" value="Family A G protein-coupled receptor-like"/>
    <property type="match status" value="1"/>
</dbReference>
<dbReference type="PROSITE" id="PS00237">
    <property type="entry name" value="G_PROTEIN_RECEP_F1_1"/>
    <property type="match status" value="1"/>
</dbReference>
<dbReference type="PROSITE" id="PS50262">
    <property type="entry name" value="G_PROTEIN_RECEP_F1_2"/>
    <property type="match status" value="1"/>
</dbReference>
<proteinExistence type="evidence at transcript level"/>
<reference key="1">
    <citation type="journal article" date="2000" name="Genomics">
        <title>Sequence, structure, and evolution of a complete human olfactory receptor gene cluster.</title>
        <authorList>
            <person name="Glusman G."/>
            <person name="Sosinsky A."/>
            <person name="Ben-Asher E."/>
            <person name="Avidan N."/>
            <person name="Sonkin D."/>
            <person name="Bahar A."/>
            <person name="Rosenthal A."/>
            <person name="Clifton S."/>
            <person name="Roe B."/>
            <person name="Ferraz C."/>
            <person name="Demaille J.G."/>
            <person name="Lancet D."/>
        </authorList>
    </citation>
    <scope>NUCLEOTIDE SEQUENCE [GENOMIC DNA]</scope>
</reference>
<reference key="2">
    <citation type="submission" date="1998-09" db="EMBL/GenBank/DDBJ databases">
        <title>DNA sequence of PAC clone PAC_clone_LLNLP704E02527Q3 from the olfactory receptor gene cluster of human chromosome 17p13.3, containing OR genes 2, 201, 93 and pseudogene 1.</title>
        <authorList>
            <person name="Ferraz C."/>
            <person name="Vidal S."/>
            <person name="Brun C."/>
            <person name="Demaille J.G."/>
        </authorList>
    </citation>
    <scope>NUCLEOTIDE SEQUENCE [GENOMIC DNA]</scope>
</reference>
<reference key="3">
    <citation type="journal article" date="2004" name="Genome Res.">
        <title>The status, quality, and expansion of the NIH full-length cDNA project: the Mammalian Gene Collection (MGC).</title>
        <authorList>
            <consortium name="The MGC Project Team"/>
        </authorList>
    </citation>
    <scope>NUCLEOTIDE SEQUENCE [LARGE SCALE MRNA]</scope>
    <scope>VARIANT ARG-27</scope>
</reference>
<reference key="4">
    <citation type="journal article" date="1994" name="Hum. Mol. Genet.">
        <title>Olfactory receptor gene cluster on human chromosome 17: possible duplication of an ancestral receptor repertoire.</title>
        <authorList>
            <person name="Ben-Arie N."/>
            <person name="Lancet D."/>
            <person name="Taylor C."/>
            <person name="Khen M."/>
            <person name="Walker N."/>
            <person name="Ledbetter D.H."/>
            <person name="Carrozzo R."/>
            <person name="Patel K."/>
            <person name="Sheer D."/>
            <person name="Lehrach H."/>
            <person name="North M.A."/>
        </authorList>
    </citation>
    <scope>NUCLEOTIDE SEQUENCE [GENOMIC DNA] OF 68-292</scope>
</reference>
<reference key="5">
    <citation type="journal article" date="1998" name="Nat. Genet.">
        <title>Distribution of olfactory receptor genes in the human genome.</title>
        <authorList>
            <person name="Rouquier S."/>
            <person name="Taviaux S."/>
            <person name="Trask B.J."/>
            <person name="Brand-Arpon V."/>
            <person name="Van den Engh G."/>
            <person name="Demaille J.G."/>
            <person name="Giorgi D."/>
        </authorList>
    </citation>
    <scope>NUCLEOTIDE SEQUENCE [GENOMIC DNA] OF 68-292</scope>
</reference>
<reference key="6">
    <citation type="journal article" date="2002" name="Genomics">
        <title>DEFOG: a practical scheme for deciphering families of genes.</title>
        <authorList>
            <person name="Fuchs T."/>
            <person name="Malecova B."/>
            <person name="Linhart C."/>
            <person name="Sharan R."/>
            <person name="Khen M."/>
            <person name="Herwig R."/>
            <person name="Shmulevich D."/>
            <person name="Elkon R."/>
            <person name="Steinfath M."/>
            <person name="O'Brien J.K."/>
            <person name="Radelof U."/>
            <person name="Lehrach H."/>
            <person name="Lancet D."/>
            <person name="Shamir R."/>
        </authorList>
    </citation>
    <scope>NUCLEOTIDE SEQUENCE [GENOMIC DNA] OF 68-292</scope>
</reference>
<reference key="7">
    <citation type="submission" date="1996-10" db="EMBL/GenBank/DDBJ databases">
        <title>Sequence of cosmid ICRF105cH07155 of the olfactory receptor gene cluster of human chromosome 17p13.3.</title>
        <authorList>
            <person name="Ferraz C."/>
            <person name="Demaille J.G."/>
        </authorList>
    </citation>
    <scope>NUCLEOTIDE SEQUENCE [GENOMIC DNA] OF 101-323</scope>
</reference>
<reference key="8">
    <citation type="journal article" date="2006" name="Science">
        <title>The consensus coding sequences of human breast and colorectal cancers.</title>
        <authorList>
            <person name="Sjoeblom T."/>
            <person name="Jones S."/>
            <person name="Wood L.D."/>
            <person name="Parsons D.W."/>
            <person name="Lin J."/>
            <person name="Barber T.D."/>
            <person name="Mandelker D."/>
            <person name="Leary R.J."/>
            <person name="Ptak J."/>
            <person name="Silliman N."/>
            <person name="Szabo S."/>
            <person name="Buckhaults P."/>
            <person name="Farrell C."/>
            <person name="Meeh P."/>
            <person name="Markowitz S.D."/>
            <person name="Willis J."/>
            <person name="Dawson D."/>
            <person name="Willson J.K.V."/>
            <person name="Gazdar A.F."/>
            <person name="Hartigan J."/>
            <person name="Wu L."/>
            <person name="Liu C."/>
            <person name="Parmigiani G."/>
            <person name="Park B.H."/>
            <person name="Bachman K.E."/>
            <person name="Papadopoulos N."/>
            <person name="Vogelstein B."/>
            <person name="Kinzler K.W."/>
            <person name="Velculescu V.E."/>
        </authorList>
    </citation>
    <scope>VARIANT [LARGE SCALE ANALYSIS] ASP-168</scope>
</reference>
<feature type="chain" id="PRO_0000150428" description="Olfactory receptor 1E2">
    <location>
        <begin position="1"/>
        <end position="323"/>
    </location>
</feature>
<feature type="topological domain" description="Extracellular" evidence="1">
    <location>
        <begin position="1"/>
        <end position="25"/>
    </location>
</feature>
<feature type="transmembrane region" description="Helical; Name=1" evidence="1">
    <location>
        <begin position="26"/>
        <end position="49"/>
    </location>
</feature>
<feature type="topological domain" description="Cytoplasmic" evidence="1">
    <location>
        <begin position="50"/>
        <end position="57"/>
    </location>
</feature>
<feature type="transmembrane region" description="Helical; Name=2" evidence="1">
    <location>
        <begin position="58"/>
        <end position="79"/>
    </location>
</feature>
<feature type="topological domain" description="Extracellular" evidence="1">
    <location>
        <begin position="80"/>
        <end position="100"/>
    </location>
</feature>
<feature type="transmembrane region" description="Helical; Name=3" evidence="1">
    <location>
        <begin position="101"/>
        <end position="120"/>
    </location>
</feature>
<feature type="topological domain" description="Cytoplasmic" evidence="1">
    <location>
        <begin position="121"/>
        <end position="148"/>
    </location>
</feature>
<feature type="transmembrane region" description="Helical; Name=4" evidence="1">
    <location>
        <begin position="149"/>
        <end position="167"/>
    </location>
</feature>
<feature type="topological domain" description="Extracellular" evidence="1">
    <location>
        <begin position="168"/>
        <end position="205"/>
    </location>
</feature>
<feature type="transmembrane region" description="Helical; Name=5" evidence="1">
    <location>
        <begin position="206"/>
        <end position="228"/>
    </location>
</feature>
<feature type="topological domain" description="Cytoplasmic" evidence="1">
    <location>
        <begin position="229"/>
        <end position="245"/>
    </location>
</feature>
<feature type="transmembrane region" description="Helical; Name=6" evidence="1">
    <location>
        <begin position="246"/>
        <end position="269"/>
    </location>
</feature>
<feature type="topological domain" description="Extracellular" evidence="1">
    <location>
        <begin position="270"/>
        <end position="281"/>
    </location>
</feature>
<feature type="transmembrane region" description="Helical; Name=7" evidence="1">
    <location>
        <begin position="282"/>
        <end position="301"/>
    </location>
</feature>
<feature type="topological domain" description="Cytoplasmic" evidence="1">
    <location>
        <begin position="302"/>
        <end position="323"/>
    </location>
</feature>
<feature type="glycosylation site" description="N-linked (GlcNAc...) asparagine" evidence="1">
    <location>
        <position position="5"/>
    </location>
</feature>
<feature type="glycosylation site" description="N-linked (GlcNAc...) asparagine" evidence="1">
    <location>
        <position position="274"/>
    </location>
</feature>
<feature type="disulfide bond" evidence="2">
    <location>
        <begin position="97"/>
        <end position="198"/>
    </location>
</feature>
<feature type="sequence variant" id="VAR_029292" description="In dbSNP:rs769431." evidence="3">
    <original>C</original>
    <variation>R</variation>
    <location>
        <position position="27"/>
    </location>
</feature>
<feature type="sequence variant" id="VAR_036207" description="In a colorectal cancer sample; somatic mutation." evidence="4">
    <original>H</original>
    <variation>D</variation>
    <location>
        <position position="168"/>
    </location>
</feature>
<feature type="sequence conflict" description="In Ref. 5; AAC39621." evidence="5" ref="5">
    <original>A</original>
    <variation>E</variation>
    <location>
        <position position="95"/>
    </location>
</feature>
<feature type="sequence conflict" description="In Ref. 5; AAC39621." evidence="5" ref="5">
    <original>S</original>
    <variation>T</variation>
    <location>
        <position position="108"/>
    </location>
</feature>
<feature type="sequence conflict" description="In Ref. 5; AAC39621." evidence="5" ref="5">
    <original>P</original>
    <variation>S</variation>
    <location>
        <position position="271"/>
    </location>
</feature>
<keyword id="KW-1003">Cell membrane</keyword>
<keyword id="KW-1015">Disulfide bond</keyword>
<keyword id="KW-0297">G-protein coupled receptor</keyword>
<keyword id="KW-0325">Glycoprotein</keyword>
<keyword id="KW-0472">Membrane</keyword>
<keyword id="KW-0552">Olfaction</keyword>
<keyword id="KW-0675">Receptor</keyword>
<keyword id="KW-1185">Reference proteome</keyword>
<keyword id="KW-0716">Sensory transduction</keyword>
<keyword id="KW-0807">Transducer</keyword>
<keyword id="KW-0812">Transmembrane</keyword>
<keyword id="KW-1133">Transmembrane helix</keyword>
<accession>P47887</accession>
<accession>O43877</accession>
<accession>O95632</accession>
<accession>Q0VAD5</accession>
<accession>Q0VAD6</accession>
<accession>Q9UL13</accession>
<sequence length="323" mass="36391">MMGQNQTSISDFLLLGLPIQPEQQNLCYALFLAMYLTTLLGNLLIIVLIRLDSHLHTPVYLFLSNLSFSDLCFSSVTMPKLLQNMQNQDPSIPYADCLTQMYFFLYFSDLESFLLVAMAYDRYVAICFPMHYTAICFLLHYTAIMSPMLCLSVVALSWVLTTFHAMLHTLLMARLCFCADNVIPHFFCDMSALLKLACSDTRVNEWVIFIMGGLILVIPFLLILGSYARIVSSILKVPSSKGICKAFSTCGSHLSVVSLFYGTVIGLYLCPSANSSTLKDTVMAMMYTVVTPMLTPFIYSLRNRDMKGALERVICKRKNPFLL</sequence>
<organism>
    <name type="scientific">Homo sapiens</name>
    <name type="common">Human</name>
    <dbReference type="NCBI Taxonomy" id="9606"/>
    <lineage>
        <taxon>Eukaryota</taxon>
        <taxon>Metazoa</taxon>
        <taxon>Chordata</taxon>
        <taxon>Craniata</taxon>
        <taxon>Vertebrata</taxon>
        <taxon>Euteleostomi</taxon>
        <taxon>Mammalia</taxon>
        <taxon>Eutheria</taxon>
        <taxon>Euarchontoglires</taxon>
        <taxon>Primates</taxon>
        <taxon>Haplorrhini</taxon>
        <taxon>Catarrhini</taxon>
        <taxon>Hominidae</taxon>
        <taxon>Homo</taxon>
    </lineage>
</organism>
<name>OR1E2_HUMAN</name>